<feature type="chain" id="PRO_0000265914" description="ATP synthase epsilon chain">
    <location>
        <begin position="1"/>
        <end position="137"/>
    </location>
</feature>
<organism>
    <name type="scientific">Syntrophomonas wolfei subsp. wolfei (strain DSM 2245B / Goettingen)</name>
    <dbReference type="NCBI Taxonomy" id="335541"/>
    <lineage>
        <taxon>Bacteria</taxon>
        <taxon>Bacillati</taxon>
        <taxon>Bacillota</taxon>
        <taxon>Clostridia</taxon>
        <taxon>Eubacteriales</taxon>
        <taxon>Syntrophomonadaceae</taxon>
        <taxon>Syntrophomonas</taxon>
    </lineage>
</organism>
<sequence>MAESTFMLEVVTPERILYRDEIQFMVAPGIEGELGIMKNHAPLVAALNIGVLRYQTSTGVDKRMAISGGFMEVIDNGTRVLAETAEHGSEIDVLRAKAAKERAEKRLEVRSEEINHARAKMALQRAIARIRASEKPL</sequence>
<evidence type="ECO:0000255" key="1">
    <source>
        <dbReference type="HAMAP-Rule" id="MF_00530"/>
    </source>
</evidence>
<reference key="1">
    <citation type="journal article" date="2010" name="Environ. Microbiol.">
        <title>The genome of Syntrophomonas wolfei: new insights into syntrophic metabolism and biohydrogen production.</title>
        <authorList>
            <person name="Sieber J.R."/>
            <person name="Sims D.R."/>
            <person name="Han C."/>
            <person name="Kim E."/>
            <person name="Lykidis A."/>
            <person name="Lapidus A.L."/>
            <person name="McDonnald E."/>
            <person name="Rohlin L."/>
            <person name="Culley D.E."/>
            <person name="Gunsalus R."/>
            <person name="McInerney M.J."/>
        </authorList>
    </citation>
    <scope>NUCLEOTIDE SEQUENCE [LARGE SCALE GENOMIC DNA]</scope>
    <source>
        <strain>DSM 2245B / Goettingen</strain>
    </source>
</reference>
<keyword id="KW-0066">ATP synthesis</keyword>
<keyword id="KW-1003">Cell membrane</keyword>
<keyword id="KW-0139">CF(1)</keyword>
<keyword id="KW-0375">Hydrogen ion transport</keyword>
<keyword id="KW-0406">Ion transport</keyword>
<keyword id="KW-0472">Membrane</keyword>
<keyword id="KW-1185">Reference proteome</keyword>
<keyword id="KW-0813">Transport</keyword>
<protein>
    <recommendedName>
        <fullName evidence="1">ATP synthase epsilon chain</fullName>
    </recommendedName>
    <alternativeName>
        <fullName evidence="1">ATP synthase F1 sector epsilon subunit</fullName>
    </alternativeName>
    <alternativeName>
        <fullName evidence="1">F-ATPase epsilon subunit</fullName>
    </alternativeName>
</protein>
<comment type="function">
    <text evidence="1">Produces ATP from ADP in the presence of a proton gradient across the membrane.</text>
</comment>
<comment type="subunit">
    <text>F-type ATPases have 2 components, CF(1) - the catalytic core - and CF(0) - the membrane proton channel. CF(1) has five subunits: alpha(3), beta(3), gamma(1), delta(1), epsilon(1). CF(0) has three main subunits: a, b and c.</text>
</comment>
<comment type="subcellular location">
    <subcellularLocation>
        <location evidence="1">Cell membrane</location>
        <topology evidence="1">Peripheral membrane protein</topology>
    </subcellularLocation>
</comment>
<comment type="similarity">
    <text evidence="1">Belongs to the ATPase epsilon chain family.</text>
</comment>
<dbReference type="EMBL" id="CP000448">
    <property type="protein sequence ID" value="ABI69670.1"/>
    <property type="molecule type" value="Genomic_DNA"/>
</dbReference>
<dbReference type="RefSeq" id="WP_011641754.1">
    <property type="nucleotide sequence ID" value="NC_008346.1"/>
</dbReference>
<dbReference type="SMR" id="Q0AUD4"/>
<dbReference type="STRING" id="335541.Swol_2381"/>
<dbReference type="KEGG" id="swo:Swol_2381"/>
<dbReference type="eggNOG" id="COG0355">
    <property type="taxonomic scope" value="Bacteria"/>
</dbReference>
<dbReference type="HOGENOM" id="CLU_084338_1_3_9"/>
<dbReference type="OrthoDB" id="9804110at2"/>
<dbReference type="Proteomes" id="UP000001968">
    <property type="component" value="Chromosome"/>
</dbReference>
<dbReference type="GO" id="GO:0005886">
    <property type="term" value="C:plasma membrane"/>
    <property type="evidence" value="ECO:0007669"/>
    <property type="project" value="UniProtKB-SubCell"/>
</dbReference>
<dbReference type="GO" id="GO:0045259">
    <property type="term" value="C:proton-transporting ATP synthase complex"/>
    <property type="evidence" value="ECO:0007669"/>
    <property type="project" value="UniProtKB-KW"/>
</dbReference>
<dbReference type="GO" id="GO:0005524">
    <property type="term" value="F:ATP binding"/>
    <property type="evidence" value="ECO:0007669"/>
    <property type="project" value="UniProtKB-UniRule"/>
</dbReference>
<dbReference type="GO" id="GO:0046933">
    <property type="term" value="F:proton-transporting ATP synthase activity, rotational mechanism"/>
    <property type="evidence" value="ECO:0007669"/>
    <property type="project" value="UniProtKB-UniRule"/>
</dbReference>
<dbReference type="CDD" id="cd12152">
    <property type="entry name" value="F1-ATPase_delta"/>
    <property type="match status" value="1"/>
</dbReference>
<dbReference type="Gene3D" id="1.20.5.440">
    <property type="entry name" value="ATP synthase delta/epsilon subunit, C-terminal domain"/>
    <property type="match status" value="1"/>
</dbReference>
<dbReference type="Gene3D" id="2.60.15.10">
    <property type="entry name" value="F0F1 ATP synthase delta/epsilon subunit, N-terminal"/>
    <property type="match status" value="1"/>
</dbReference>
<dbReference type="HAMAP" id="MF_00530">
    <property type="entry name" value="ATP_synth_epsil_bac"/>
    <property type="match status" value="1"/>
</dbReference>
<dbReference type="InterPro" id="IPR036794">
    <property type="entry name" value="ATP_F1_dsu/esu_C_sf"/>
</dbReference>
<dbReference type="InterPro" id="IPR001469">
    <property type="entry name" value="ATP_synth_F1_dsu/esu"/>
</dbReference>
<dbReference type="InterPro" id="IPR020546">
    <property type="entry name" value="ATP_synth_F1_dsu/esu_N"/>
</dbReference>
<dbReference type="InterPro" id="IPR020547">
    <property type="entry name" value="ATP_synth_F1_esu_C"/>
</dbReference>
<dbReference type="InterPro" id="IPR036771">
    <property type="entry name" value="ATPsynth_dsu/esu_N"/>
</dbReference>
<dbReference type="NCBIfam" id="TIGR01216">
    <property type="entry name" value="ATP_synt_epsi"/>
    <property type="match status" value="1"/>
</dbReference>
<dbReference type="NCBIfam" id="NF001846">
    <property type="entry name" value="PRK00571.1-3"/>
    <property type="match status" value="1"/>
</dbReference>
<dbReference type="NCBIfam" id="NF009980">
    <property type="entry name" value="PRK13446.1"/>
    <property type="match status" value="1"/>
</dbReference>
<dbReference type="PANTHER" id="PTHR13822">
    <property type="entry name" value="ATP SYNTHASE DELTA/EPSILON CHAIN"/>
    <property type="match status" value="1"/>
</dbReference>
<dbReference type="PANTHER" id="PTHR13822:SF10">
    <property type="entry name" value="ATP SYNTHASE EPSILON CHAIN, CHLOROPLASTIC"/>
    <property type="match status" value="1"/>
</dbReference>
<dbReference type="Pfam" id="PF00401">
    <property type="entry name" value="ATP-synt_DE"/>
    <property type="match status" value="1"/>
</dbReference>
<dbReference type="Pfam" id="PF02823">
    <property type="entry name" value="ATP-synt_DE_N"/>
    <property type="match status" value="1"/>
</dbReference>
<dbReference type="SUPFAM" id="SSF46604">
    <property type="entry name" value="Epsilon subunit of F1F0-ATP synthase C-terminal domain"/>
    <property type="match status" value="1"/>
</dbReference>
<dbReference type="SUPFAM" id="SSF51344">
    <property type="entry name" value="Epsilon subunit of F1F0-ATP synthase N-terminal domain"/>
    <property type="match status" value="1"/>
</dbReference>
<accession>Q0AUD4</accession>
<gene>
    <name evidence="1" type="primary">atpC</name>
    <name type="ordered locus">Swol_2381</name>
</gene>
<proteinExistence type="inferred from homology"/>
<name>ATPE_SYNWW</name>